<name>AROE_BACHK</name>
<evidence type="ECO:0000255" key="1">
    <source>
        <dbReference type="HAMAP-Rule" id="MF_00222"/>
    </source>
</evidence>
<sequence>MKQLYGVIGNPIGHSLSPVMHNDAFEHLNMDAHYHAFLVKEEVLGEAVRGLKALGISGFNVTTPHKVAIMDYLDEIDPLAKQIGAVNTVVHKDGKLIGYNTDGIGFVRALQSISSEPLQEKRILLLGAGGASRAIYFSLADAGVKEIDVANRTVDKAKELIAACTATVHSVALSLEKATKEQGSYDIIIQTTTIGMHPRVEHTPLQISSLKKGTIVSDIIYNPFETKILCEAKEQGAIIQNGIDMFVYQGALAFEMWTGCVPNIERMKQLVIRKLGG</sequence>
<feature type="chain" id="PRO_1000021262" description="Shikimate dehydrogenase (NADP(+))">
    <location>
        <begin position="1"/>
        <end position="277"/>
    </location>
</feature>
<feature type="active site" description="Proton acceptor" evidence="1">
    <location>
        <position position="66"/>
    </location>
</feature>
<feature type="binding site" evidence="1">
    <location>
        <begin position="15"/>
        <end position="17"/>
    </location>
    <ligand>
        <name>shikimate</name>
        <dbReference type="ChEBI" id="CHEBI:36208"/>
    </ligand>
</feature>
<feature type="binding site" evidence="1">
    <location>
        <position position="62"/>
    </location>
    <ligand>
        <name>shikimate</name>
        <dbReference type="ChEBI" id="CHEBI:36208"/>
    </ligand>
</feature>
<feature type="binding site" evidence="1">
    <location>
        <position position="87"/>
    </location>
    <ligand>
        <name>shikimate</name>
        <dbReference type="ChEBI" id="CHEBI:36208"/>
    </ligand>
</feature>
<feature type="binding site" evidence="1">
    <location>
        <position position="102"/>
    </location>
    <ligand>
        <name>shikimate</name>
        <dbReference type="ChEBI" id="CHEBI:36208"/>
    </ligand>
</feature>
<feature type="binding site" evidence="1">
    <location>
        <begin position="127"/>
        <end position="131"/>
    </location>
    <ligand>
        <name>NADP(+)</name>
        <dbReference type="ChEBI" id="CHEBI:58349"/>
    </ligand>
</feature>
<feature type="binding site" evidence="1">
    <location>
        <begin position="151"/>
        <end position="156"/>
    </location>
    <ligand>
        <name>NADP(+)</name>
        <dbReference type="ChEBI" id="CHEBI:58349"/>
    </ligand>
</feature>
<feature type="binding site" evidence="1">
    <location>
        <position position="219"/>
    </location>
    <ligand>
        <name>NADP(+)</name>
        <dbReference type="ChEBI" id="CHEBI:58349"/>
    </ligand>
</feature>
<feature type="binding site" evidence="1">
    <location>
        <position position="221"/>
    </location>
    <ligand>
        <name>shikimate</name>
        <dbReference type="ChEBI" id="CHEBI:36208"/>
    </ligand>
</feature>
<feature type="binding site" evidence="1">
    <location>
        <position position="242"/>
    </location>
    <ligand>
        <name>NADP(+)</name>
        <dbReference type="ChEBI" id="CHEBI:58349"/>
    </ligand>
</feature>
<dbReference type="EC" id="1.1.1.25" evidence="1"/>
<dbReference type="EMBL" id="AE017355">
    <property type="protein sequence ID" value="AAT63595.1"/>
    <property type="molecule type" value="Genomic_DNA"/>
</dbReference>
<dbReference type="RefSeq" id="WP_000812091.1">
    <property type="nucleotide sequence ID" value="NC_005957.1"/>
</dbReference>
<dbReference type="RefSeq" id="YP_038388.1">
    <property type="nucleotide sequence ID" value="NC_005957.1"/>
</dbReference>
<dbReference type="SMR" id="Q6HDI8"/>
<dbReference type="KEGG" id="btk:BT9727_4070"/>
<dbReference type="PATRIC" id="fig|281309.8.peg.4343"/>
<dbReference type="HOGENOM" id="CLU_044063_4_1_9"/>
<dbReference type="UniPathway" id="UPA00053">
    <property type="reaction ID" value="UER00087"/>
</dbReference>
<dbReference type="Proteomes" id="UP000001301">
    <property type="component" value="Chromosome"/>
</dbReference>
<dbReference type="GO" id="GO:0005829">
    <property type="term" value="C:cytosol"/>
    <property type="evidence" value="ECO:0007669"/>
    <property type="project" value="TreeGrafter"/>
</dbReference>
<dbReference type="GO" id="GO:0050661">
    <property type="term" value="F:NADP binding"/>
    <property type="evidence" value="ECO:0007669"/>
    <property type="project" value="InterPro"/>
</dbReference>
<dbReference type="GO" id="GO:0004764">
    <property type="term" value="F:shikimate 3-dehydrogenase (NADP+) activity"/>
    <property type="evidence" value="ECO:0007669"/>
    <property type="project" value="UniProtKB-UniRule"/>
</dbReference>
<dbReference type="GO" id="GO:0008652">
    <property type="term" value="P:amino acid biosynthetic process"/>
    <property type="evidence" value="ECO:0007669"/>
    <property type="project" value="UniProtKB-KW"/>
</dbReference>
<dbReference type="GO" id="GO:0009073">
    <property type="term" value="P:aromatic amino acid family biosynthetic process"/>
    <property type="evidence" value="ECO:0007669"/>
    <property type="project" value="UniProtKB-KW"/>
</dbReference>
<dbReference type="GO" id="GO:0009423">
    <property type="term" value="P:chorismate biosynthetic process"/>
    <property type="evidence" value="ECO:0007669"/>
    <property type="project" value="UniProtKB-UniRule"/>
</dbReference>
<dbReference type="GO" id="GO:0019632">
    <property type="term" value="P:shikimate metabolic process"/>
    <property type="evidence" value="ECO:0007669"/>
    <property type="project" value="InterPro"/>
</dbReference>
<dbReference type="CDD" id="cd01065">
    <property type="entry name" value="NAD_bind_Shikimate_DH"/>
    <property type="match status" value="1"/>
</dbReference>
<dbReference type="FunFam" id="3.40.50.10860:FF:000011">
    <property type="entry name" value="Shikimate dehydrogenase (NADP(+))"/>
    <property type="match status" value="1"/>
</dbReference>
<dbReference type="Gene3D" id="3.40.50.10860">
    <property type="entry name" value="Leucine Dehydrogenase, chain A, domain 1"/>
    <property type="match status" value="1"/>
</dbReference>
<dbReference type="Gene3D" id="3.40.50.720">
    <property type="entry name" value="NAD(P)-binding Rossmann-like Domain"/>
    <property type="match status" value="1"/>
</dbReference>
<dbReference type="HAMAP" id="MF_00222">
    <property type="entry name" value="Shikimate_DH_AroE"/>
    <property type="match status" value="1"/>
</dbReference>
<dbReference type="InterPro" id="IPR046346">
    <property type="entry name" value="Aminoacid_DH-like_N_sf"/>
</dbReference>
<dbReference type="InterPro" id="IPR036291">
    <property type="entry name" value="NAD(P)-bd_dom_sf"/>
</dbReference>
<dbReference type="InterPro" id="IPR041121">
    <property type="entry name" value="SDH_C"/>
</dbReference>
<dbReference type="InterPro" id="IPR011342">
    <property type="entry name" value="Shikimate_DH"/>
</dbReference>
<dbReference type="InterPro" id="IPR013708">
    <property type="entry name" value="Shikimate_DH-bd_N"/>
</dbReference>
<dbReference type="InterPro" id="IPR022893">
    <property type="entry name" value="Shikimate_DH_fam"/>
</dbReference>
<dbReference type="InterPro" id="IPR006151">
    <property type="entry name" value="Shikm_DH/Glu-tRNA_Rdtase"/>
</dbReference>
<dbReference type="NCBIfam" id="TIGR00507">
    <property type="entry name" value="aroE"/>
    <property type="match status" value="1"/>
</dbReference>
<dbReference type="NCBIfam" id="NF001319">
    <property type="entry name" value="PRK00258.3-3"/>
    <property type="match status" value="1"/>
</dbReference>
<dbReference type="PANTHER" id="PTHR21089:SF1">
    <property type="entry name" value="BIFUNCTIONAL 3-DEHYDROQUINATE DEHYDRATASE_SHIKIMATE DEHYDROGENASE, CHLOROPLASTIC"/>
    <property type="match status" value="1"/>
</dbReference>
<dbReference type="PANTHER" id="PTHR21089">
    <property type="entry name" value="SHIKIMATE DEHYDROGENASE"/>
    <property type="match status" value="1"/>
</dbReference>
<dbReference type="Pfam" id="PF18317">
    <property type="entry name" value="SDH_C"/>
    <property type="match status" value="1"/>
</dbReference>
<dbReference type="Pfam" id="PF01488">
    <property type="entry name" value="Shikimate_DH"/>
    <property type="match status" value="1"/>
</dbReference>
<dbReference type="Pfam" id="PF08501">
    <property type="entry name" value="Shikimate_dh_N"/>
    <property type="match status" value="1"/>
</dbReference>
<dbReference type="SUPFAM" id="SSF53223">
    <property type="entry name" value="Aminoacid dehydrogenase-like, N-terminal domain"/>
    <property type="match status" value="1"/>
</dbReference>
<dbReference type="SUPFAM" id="SSF51735">
    <property type="entry name" value="NAD(P)-binding Rossmann-fold domains"/>
    <property type="match status" value="1"/>
</dbReference>
<comment type="function">
    <text evidence="1">Involved in the biosynthesis of the chorismate, which leads to the biosynthesis of aromatic amino acids. Catalyzes the reversible NADPH linked reduction of 3-dehydroshikimate (DHSA) to yield shikimate (SA).</text>
</comment>
<comment type="catalytic activity">
    <reaction evidence="1">
        <text>shikimate + NADP(+) = 3-dehydroshikimate + NADPH + H(+)</text>
        <dbReference type="Rhea" id="RHEA:17737"/>
        <dbReference type="ChEBI" id="CHEBI:15378"/>
        <dbReference type="ChEBI" id="CHEBI:16630"/>
        <dbReference type="ChEBI" id="CHEBI:36208"/>
        <dbReference type="ChEBI" id="CHEBI:57783"/>
        <dbReference type="ChEBI" id="CHEBI:58349"/>
        <dbReference type="EC" id="1.1.1.25"/>
    </reaction>
</comment>
<comment type="pathway">
    <text evidence="1">Metabolic intermediate biosynthesis; chorismate biosynthesis; chorismate from D-erythrose 4-phosphate and phosphoenolpyruvate: step 4/7.</text>
</comment>
<comment type="subunit">
    <text evidence="1">Homodimer.</text>
</comment>
<comment type="similarity">
    <text evidence="1">Belongs to the shikimate dehydrogenase family.</text>
</comment>
<gene>
    <name evidence="1" type="primary">aroE</name>
    <name type="ordered locus">BT9727_4070</name>
</gene>
<organism>
    <name type="scientific">Bacillus thuringiensis subsp. konkukian (strain 97-27)</name>
    <dbReference type="NCBI Taxonomy" id="281309"/>
    <lineage>
        <taxon>Bacteria</taxon>
        <taxon>Bacillati</taxon>
        <taxon>Bacillota</taxon>
        <taxon>Bacilli</taxon>
        <taxon>Bacillales</taxon>
        <taxon>Bacillaceae</taxon>
        <taxon>Bacillus</taxon>
        <taxon>Bacillus cereus group</taxon>
    </lineage>
</organism>
<accession>Q6HDI8</accession>
<proteinExistence type="inferred from homology"/>
<reference key="1">
    <citation type="journal article" date="2006" name="J. Bacteriol.">
        <title>Pathogenomic sequence analysis of Bacillus cereus and Bacillus thuringiensis isolates closely related to Bacillus anthracis.</title>
        <authorList>
            <person name="Han C.S."/>
            <person name="Xie G."/>
            <person name="Challacombe J.F."/>
            <person name="Altherr M.R."/>
            <person name="Bhotika S.S."/>
            <person name="Bruce D."/>
            <person name="Campbell C.S."/>
            <person name="Campbell M.L."/>
            <person name="Chen J."/>
            <person name="Chertkov O."/>
            <person name="Cleland C."/>
            <person name="Dimitrijevic M."/>
            <person name="Doggett N.A."/>
            <person name="Fawcett J.J."/>
            <person name="Glavina T."/>
            <person name="Goodwin L.A."/>
            <person name="Hill K.K."/>
            <person name="Hitchcock P."/>
            <person name="Jackson P.J."/>
            <person name="Keim P."/>
            <person name="Kewalramani A.R."/>
            <person name="Longmire J."/>
            <person name="Lucas S."/>
            <person name="Malfatti S."/>
            <person name="McMurry K."/>
            <person name="Meincke L.J."/>
            <person name="Misra M."/>
            <person name="Moseman B.L."/>
            <person name="Mundt M."/>
            <person name="Munk A.C."/>
            <person name="Okinaka R.T."/>
            <person name="Parson-Quintana B."/>
            <person name="Reilly L.P."/>
            <person name="Richardson P."/>
            <person name="Robinson D.L."/>
            <person name="Rubin E."/>
            <person name="Saunders E."/>
            <person name="Tapia R."/>
            <person name="Tesmer J.G."/>
            <person name="Thayer N."/>
            <person name="Thompson L.S."/>
            <person name="Tice H."/>
            <person name="Ticknor L.O."/>
            <person name="Wills P.L."/>
            <person name="Brettin T.S."/>
            <person name="Gilna P."/>
        </authorList>
    </citation>
    <scope>NUCLEOTIDE SEQUENCE [LARGE SCALE GENOMIC DNA]</scope>
    <source>
        <strain>97-27</strain>
    </source>
</reference>
<keyword id="KW-0028">Amino-acid biosynthesis</keyword>
<keyword id="KW-0057">Aromatic amino acid biosynthesis</keyword>
<keyword id="KW-0521">NADP</keyword>
<keyword id="KW-0560">Oxidoreductase</keyword>
<protein>
    <recommendedName>
        <fullName evidence="1">Shikimate dehydrogenase (NADP(+))</fullName>
        <shortName evidence="1">SDH</shortName>
        <ecNumber evidence="1">1.1.1.25</ecNumber>
    </recommendedName>
</protein>